<evidence type="ECO:0000256" key="1">
    <source>
        <dbReference type="SAM" id="MobiDB-lite"/>
    </source>
</evidence>
<evidence type="ECO:0000305" key="2"/>
<organismHost>
    <name type="scientific">Homo sapiens</name>
    <name type="common">Human</name>
    <dbReference type="NCBI Taxonomy" id="9606"/>
</organismHost>
<organismHost>
    <name type="scientific">Ixodida</name>
    <name type="common">ticks</name>
    <dbReference type="NCBI Taxonomy" id="6935"/>
</organismHost>
<name>NCAP_DHVI1</name>
<accession>P11468</accession>
<gene>
    <name type="primary">P5</name>
</gene>
<sequence length="477" mass="53968">MSSTTPKRSEPADEDMEVEVKRSKVETDPKSTQRKYEDFKAQMVTLANQLKIDLKVKHNADIIGSIVMAACTGNAIRETGKYSFFFNDEKDGWKLREVELNCKPVIDWANQTLTDEQKREWYPFLASLQLCVKTEDAILWQRNPVTRELQVSPVCEPFATGYNIKDKLKKSRPLSVGPLNHLLHWVNLQTEKSVGKGRKLSPRAAAGIRKRLEATLMRQTIGQSQKAMLRQIFDGKLAYVRTLAHSYCSIKPHIENQFVLPYSVIAVTDSFENADMSSEWVYKKLCEASKKILLTGPNESWKTFMAQMLIYCTFRCLHEDLGVLTSMFGMVFEPRKSKGKYCKSSELQVLGSQEITYKFWSKPQRGAPRNLGGARRGQICTRPSFRGVRATYNQYSSLEQLEKACGNPTSENVVEALNAEFEDTQNSPLKAQGRSTKGGLPMSTKATSRLQASFCLKFSLICVCNFCCFLSLLLGIC</sequence>
<keyword id="KW-0167">Capsid protein</keyword>
<keyword id="KW-1139">Helical capsid protein</keyword>
<keyword id="KW-0687">Ribonucleoprotein</keyword>
<keyword id="KW-0543">Viral nucleoprotein</keyword>
<keyword id="KW-1163">Viral penetration into host nucleus</keyword>
<keyword id="KW-0946">Virion</keyword>
<keyword id="KW-1160">Virus entry into host cell</keyword>
<proteinExistence type="inferred from homology"/>
<comment type="subcellular location">
    <subcellularLocation>
        <location evidence="2">Virion</location>
    </subcellularLocation>
</comment>
<comment type="similarity">
    <text evidence="2">Belongs to the influenza viruses nucleoprotein family.</text>
</comment>
<reference key="1">
    <citation type="journal article" date="1987" name="Virology">
        <title>Complete nucleotide sequence of the tick-borne, orthomyxo-like Dhori/Indian/1313/61 virus nucleoprotein gene.</title>
        <authorList>
            <person name="Fuller F.J."/>
            <person name="Freedman-Faulstich E.Z."/>
            <person name="Barnes J.A."/>
        </authorList>
    </citation>
    <scope>NUCLEOTIDE SEQUENCE [GENOMIC RNA]</scope>
</reference>
<organism>
    <name type="scientific">Dhori virus (strain Indian/1313/61)</name>
    <name type="common">Dho</name>
    <dbReference type="NCBI Taxonomy" id="11319"/>
    <lineage>
        <taxon>Viruses</taxon>
        <taxon>Riboviria</taxon>
        <taxon>Orthornavirae</taxon>
        <taxon>Negarnaviricota</taxon>
        <taxon>Polyploviricotina</taxon>
        <taxon>Insthoviricetes</taxon>
        <taxon>Articulavirales</taxon>
        <taxon>Orthomyxoviridae</taxon>
        <taxon>Thogotovirus</taxon>
        <taxon>Thogotovirus dhoriense</taxon>
    </lineage>
</organism>
<dbReference type="EMBL" id="M17435">
    <property type="protein sequence ID" value="AAA42967.1"/>
    <property type="molecule type" value="Genomic_RNA"/>
</dbReference>
<dbReference type="PIR" id="A26800">
    <property type="entry name" value="VHVUDH"/>
</dbReference>
<dbReference type="SMR" id="P11468"/>
<dbReference type="GO" id="GO:0019029">
    <property type="term" value="C:helical viral capsid"/>
    <property type="evidence" value="ECO:0007669"/>
    <property type="project" value="UniProtKB-KW"/>
</dbReference>
<dbReference type="GO" id="GO:0043657">
    <property type="term" value="C:host cell"/>
    <property type="evidence" value="ECO:0007669"/>
    <property type="project" value="GOC"/>
</dbReference>
<dbReference type="GO" id="GO:1990904">
    <property type="term" value="C:ribonucleoprotein complex"/>
    <property type="evidence" value="ECO:0007669"/>
    <property type="project" value="UniProtKB-KW"/>
</dbReference>
<dbReference type="GO" id="GO:0019013">
    <property type="term" value="C:viral nucleocapsid"/>
    <property type="evidence" value="ECO:0007669"/>
    <property type="project" value="UniProtKB-KW"/>
</dbReference>
<dbReference type="GO" id="GO:0046718">
    <property type="term" value="P:symbiont entry into host cell"/>
    <property type="evidence" value="ECO:0007669"/>
    <property type="project" value="UniProtKB-KW"/>
</dbReference>
<dbReference type="GO" id="GO:0075732">
    <property type="term" value="P:viral penetration into host nucleus"/>
    <property type="evidence" value="ECO:0007669"/>
    <property type="project" value="UniProtKB-KW"/>
</dbReference>
<dbReference type="SUPFAM" id="SSF161003">
    <property type="entry name" value="flu NP-like"/>
    <property type="match status" value="1"/>
</dbReference>
<protein>
    <recommendedName>
        <fullName>Nucleoprotein</fullName>
    </recommendedName>
    <alternativeName>
        <fullName>Nucleocapsid protein</fullName>
        <shortName>Protein N</shortName>
    </alternativeName>
</protein>
<feature type="chain" id="PRO_0000079146" description="Nucleoprotein">
    <location>
        <begin position="1"/>
        <end position="477"/>
    </location>
</feature>
<feature type="region of interest" description="Disordered" evidence="1">
    <location>
        <begin position="1"/>
        <end position="32"/>
    </location>
</feature>
<feature type="compositionally biased region" description="Basic and acidic residues" evidence="1">
    <location>
        <begin position="18"/>
        <end position="32"/>
    </location>
</feature>